<gene>
    <name evidence="1" type="primary">rpsO</name>
    <name type="ordered locus">USA300HOU_1205</name>
</gene>
<accession>A8Z3V3</accession>
<keyword id="KW-0687">Ribonucleoprotein</keyword>
<keyword id="KW-0689">Ribosomal protein</keyword>
<keyword id="KW-0694">RNA-binding</keyword>
<keyword id="KW-0699">rRNA-binding</keyword>
<feature type="chain" id="PRO_1000086825" description="Small ribosomal subunit protein uS15">
    <location>
        <begin position="1"/>
        <end position="89"/>
    </location>
</feature>
<comment type="function">
    <text evidence="1">One of the primary rRNA binding proteins, it binds directly to 16S rRNA where it helps nucleate assembly of the platform of the 30S subunit by binding and bridging several RNA helices of the 16S rRNA.</text>
</comment>
<comment type="function">
    <text evidence="1">Forms an intersubunit bridge (bridge B4) with the 23S rRNA of the 50S subunit in the ribosome.</text>
</comment>
<comment type="subunit">
    <text evidence="1">Part of the 30S ribosomal subunit. Forms a bridge to the 50S subunit in the 70S ribosome, contacting the 23S rRNA.</text>
</comment>
<comment type="similarity">
    <text evidence="1">Belongs to the universal ribosomal protein uS15 family.</text>
</comment>
<sequence>MAISQERKNEIIKEYRVHETDTGSPEVQIAVLTAEINAVNEHLRTHKKDHHSRRGLLKMVGRRRHLLNYLRSKDIQRYRELIKSLGIRR</sequence>
<dbReference type="EMBL" id="CP000730">
    <property type="protein sequence ID" value="ABX29219.1"/>
    <property type="molecule type" value="Genomic_DNA"/>
</dbReference>
<dbReference type="RefSeq" id="WP_001018328.1">
    <property type="nucleotide sequence ID" value="NC_010079.1"/>
</dbReference>
<dbReference type="SMR" id="A8Z3V3"/>
<dbReference type="KEGG" id="sax:USA300HOU_1205"/>
<dbReference type="HOGENOM" id="CLU_148518_0_0_9"/>
<dbReference type="GO" id="GO:0022627">
    <property type="term" value="C:cytosolic small ribosomal subunit"/>
    <property type="evidence" value="ECO:0007669"/>
    <property type="project" value="TreeGrafter"/>
</dbReference>
<dbReference type="GO" id="GO:0019843">
    <property type="term" value="F:rRNA binding"/>
    <property type="evidence" value="ECO:0007669"/>
    <property type="project" value="UniProtKB-UniRule"/>
</dbReference>
<dbReference type="GO" id="GO:0003735">
    <property type="term" value="F:structural constituent of ribosome"/>
    <property type="evidence" value="ECO:0007669"/>
    <property type="project" value="InterPro"/>
</dbReference>
<dbReference type="GO" id="GO:0006412">
    <property type="term" value="P:translation"/>
    <property type="evidence" value="ECO:0007669"/>
    <property type="project" value="UniProtKB-UniRule"/>
</dbReference>
<dbReference type="CDD" id="cd00353">
    <property type="entry name" value="Ribosomal_S15p_S13e"/>
    <property type="match status" value="1"/>
</dbReference>
<dbReference type="FunFam" id="1.10.287.10:FF:000002">
    <property type="entry name" value="30S ribosomal protein S15"/>
    <property type="match status" value="1"/>
</dbReference>
<dbReference type="Gene3D" id="6.10.250.3130">
    <property type="match status" value="1"/>
</dbReference>
<dbReference type="Gene3D" id="1.10.287.10">
    <property type="entry name" value="S15/NS1, RNA-binding"/>
    <property type="match status" value="1"/>
</dbReference>
<dbReference type="HAMAP" id="MF_01343_B">
    <property type="entry name" value="Ribosomal_uS15_B"/>
    <property type="match status" value="1"/>
</dbReference>
<dbReference type="InterPro" id="IPR000589">
    <property type="entry name" value="Ribosomal_uS15"/>
</dbReference>
<dbReference type="InterPro" id="IPR005290">
    <property type="entry name" value="Ribosomal_uS15_bac-type"/>
</dbReference>
<dbReference type="InterPro" id="IPR009068">
    <property type="entry name" value="uS15_NS1_RNA-bd_sf"/>
</dbReference>
<dbReference type="NCBIfam" id="TIGR00952">
    <property type="entry name" value="S15_bact"/>
    <property type="match status" value="1"/>
</dbReference>
<dbReference type="PANTHER" id="PTHR23321">
    <property type="entry name" value="RIBOSOMAL PROTEIN S15, BACTERIAL AND ORGANELLAR"/>
    <property type="match status" value="1"/>
</dbReference>
<dbReference type="PANTHER" id="PTHR23321:SF26">
    <property type="entry name" value="SMALL RIBOSOMAL SUBUNIT PROTEIN US15M"/>
    <property type="match status" value="1"/>
</dbReference>
<dbReference type="Pfam" id="PF00312">
    <property type="entry name" value="Ribosomal_S15"/>
    <property type="match status" value="1"/>
</dbReference>
<dbReference type="SMART" id="SM01387">
    <property type="entry name" value="Ribosomal_S15"/>
    <property type="match status" value="1"/>
</dbReference>
<dbReference type="SUPFAM" id="SSF47060">
    <property type="entry name" value="S15/NS1 RNA-binding domain"/>
    <property type="match status" value="1"/>
</dbReference>
<dbReference type="PROSITE" id="PS00362">
    <property type="entry name" value="RIBOSOMAL_S15"/>
    <property type="match status" value="1"/>
</dbReference>
<name>RS15_STAAT</name>
<evidence type="ECO:0000255" key="1">
    <source>
        <dbReference type="HAMAP-Rule" id="MF_01343"/>
    </source>
</evidence>
<evidence type="ECO:0000305" key="2"/>
<organism>
    <name type="scientific">Staphylococcus aureus (strain USA300 / TCH1516)</name>
    <dbReference type="NCBI Taxonomy" id="451516"/>
    <lineage>
        <taxon>Bacteria</taxon>
        <taxon>Bacillati</taxon>
        <taxon>Bacillota</taxon>
        <taxon>Bacilli</taxon>
        <taxon>Bacillales</taxon>
        <taxon>Staphylococcaceae</taxon>
        <taxon>Staphylococcus</taxon>
    </lineage>
</organism>
<protein>
    <recommendedName>
        <fullName evidence="1">Small ribosomal subunit protein uS15</fullName>
    </recommendedName>
    <alternativeName>
        <fullName evidence="2">30S ribosomal protein S15</fullName>
    </alternativeName>
</protein>
<reference key="1">
    <citation type="journal article" date="2007" name="BMC Microbiol.">
        <title>Subtle genetic changes enhance virulence of methicillin resistant and sensitive Staphylococcus aureus.</title>
        <authorList>
            <person name="Highlander S.K."/>
            <person name="Hulten K.G."/>
            <person name="Qin X."/>
            <person name="Jiang H."/>
            <person name="Yerrapragada S."/>
            <person name="Mason E.O. Jr."/>
            <person name="Shang Y."/>
            <person name="Williams T.M."/>
            <person name="Fortunov R.M."/>
            <person name="Liu Y."/>
            <person name="Igboeli O."/>
            <person name="Petrosino J."/>
            <person name="Tirumalai M."/>
            <person name="Uzman A."/>
            <person name="Fox G.E."/>
            <person name="Cardenas A.M."/>
            <person name="Muzny D.M."/>
            <person name="Hemphill L."/>
            <person name="Ding Y."/>
            <person name="Dugan S."/>
            <person name="Blyth P.R."/>
            <person name="Buhay C.J."/>
            <person name="Dinh H.H."/>
            <person name="Hawes A.C."/>
            <person name="Holder M."/>
            <person name="Kovar C.L."/>
            <person name="Lee S.L."/>
            <person name="Liu W."/>
            <person name="Nazareth L.V."/>
            <person name="Wang Q."/>
            <person name="Zhou J."/>
            <person name="Kaplan S.L."/>
            <person name="Weinstock G.M."/>
        </authorList>
    </citation>
    <scope>NUCLEOTIDE SEQUENCE [LARGE SCALE GENOMIC DNA]</scope>
    <source>
        <strain>USA300 / TCH1516</strain>
    </source>
</reference>
<proteinExistence type="inferred from homology"/>